<evidence type="ECO:0000255" key="1">
    <source>
        <dbReference type="HAMAP-Rule" id="MF_01536"/>
    </source>
</evidence>
<feature type="chain" id="PRO_0000105885" description="UPF0344 protein ABC2900">
    <location>
        <begin position="1"/>
        <end position="126"/>
    </location>
</feature>
<feature type="transmembrane region" description="Helical" evidence="1">
    <location>
        <begin position="16"/>
        <end position="36"/>
    </location>
</feature>
<feature type="transmembrane region" description="Helical" evidence="1">
    <location>
        <begin position="43"/>
        <end position="63"/>
    </location>
</feature>
<feature type="transmembrane region" description="Helical" evidence="1">
    <location>
        <begin position="66"/>
        <end position="86"/>
    </location>
</feature>
<feature type="transmembrane region" description="Helical" evidence="1">
    <location>
        <begin position="104"/>
        <end position="124"/>
    </location>
</feature>
<name>Y2900_SHOC1</name>
<dbReference type="EMBL" id="AP006627">
    <property type="protein sequence ID" value="BAD65434.1"/>
    <property type="molecule type" value="Genomic_DNA"/>
</dbReference>
<dbReference type="RefSeq" id="WP_011247742.1">
    <property type="nucleotide sequence ID" value="NC_006582.1"/>
</dbReference>
<dbReference type="STRING" id="66692.ABC2900"/>
<dbReference type="KEGG" id="bcl:ABC2900"/>
<dbReference type="eggNOG" id="ENOG50333GG">
    <property type="taxonomic scope" value="Bacteria"/>
</dbReference>
<dbReference type="HOGENOM" id="CLU_146641_1_0_9"/>
<dbReference type="OrthoDB" id="2365314at2"/>
<dbReference type="Proteomes" id="UP000001168">
    <property type="component" value="Chromosome"/>
</dbReference>
<dbReference type="GO" id="GO:0005886">
    <property type="term" value="C:plasma membrane"/>
    <property type="evidence" value="ECO:0007669"/>
    <property type="project" value="UniProtKB-SubCell"/>
</dbReference>
<dbReference type="HAMAP" id="MF_01536">
    <property type="entry name" value="UPF0344"/>
    <property type="match status" value="1"/>
</dbReference>
<dbReference type="InterPro" id="IPR010899">
    <property type="entry name" value="UPF0344"/>
</dbReference>
<dbReference type="NCBIfam" id="NF010198">
    <property type="entry name" value="PRK13673.1-5"/>
    <property type="match status" value="1"/>
</dbReference>
<dbReference type="Pfam" id="PF07457">
    <property type="entry name" value="DUF1516"/>
    <property type="match status" value="1"/>
</dbReference>
<comment type="subcellular location">
    <subcellularLocation>
        <location evidence="1">Cell membrane</location>
        <topology evidence="1">Multi-pass membrane protein</topology>
    </subcellularLocation>
</comment>
<comment type="similarity">
    <text evidence="1">Belongs to the UPF0344 family.</text>
</comment>
<proteinExistence type="inferred from homology"/>
<protein>
    <recommendedName>
        <fullName evidence="1">UPF0344 protein ABC2900</fullName>
    </recommendedName>
</protein>
<gene>
    <name type="ordered locus">ABC2900</name>
</gene>
<sequence length="126" mass="13928">MNSGGFIQENFSIFQASHEGSWAILAILFLVAYFLFRGGKSKAGTIIHMIARLFFVIMLVTGASMLIAYQFAYFFFIKGILAVLLIGFMEAALGKAKRNENSLGMLFAVLVVLVVIVLMGYGIIRF</sequence>
<keyword id="KW-1003">Cell membrane</keyword>
<keyword id="KW-0472">Membrane</keyword>
<keyword id="KW-1185">Reference proteome</keyword>
<keyword id="KW-0812">Transmembrane</keyword>
<keyword id="KW-1133">Transmembrane helix</keyword>
<reference key="1">
    <citation type="submission" date="2003-10" db="EMBL/GenBank/DDBJ databases">
        <title>The complete genome sequence of the alkaliphilic Bacillus clausii KSM-K16.</title>
        <authorList>
            <person name="Takaki Y."/>
            <person name="Kageyama Y."/>
            <person name="Shimamura S."/>
            <person name="Suzuki H."/>
            <person name="Nishi S."/>
            <person name="Hatada Y."/>
            <person name="Kawai S."/>
            <person name="Ito S."/>
            <person name="Horikoshi K."/>
        </authorList>
    </citation>
    <scope>NUCLEOTIDE SEQUENCE [LARGE SCALE GENOMIC DNA]</scope>
    <source>
        <strain>KSM-K16</strain>
    </source>
</reference>
<organism>
    <name type="scientific">Shouchella clausii (strain KSM-K16)</name>
    <name type="common">Alkalihalobacillus clausii</name>
    <dbReference type="NCBI Taxonomy" id="66692"/>
    <lineage>
        <taxon>Bacteria</taxon>
        <taxon>Bacillati</taxon>
        <taxon>Bacillota</taxon>
        <taxon>Bacilli</taxon>
        <taxon>Bacillales</taxon>
        <taxon>Bacillaceae</taxon>
        <taxon>Shouchella</taxon>
    </lineage>
</organism>
<accession>Q5WDX6</accession>